<reference key="1">
    <citation type="journal article" date="2008" name="Genome Biol.">
        <title>The genome sequence of the model ascomycete fungus Podospora anserina.</title>
        <authorList>
            <person name="Espagne E."/>
            <person name="Lespinet O."/>
            <person name="Malagnac F."/>
            <person name="Da Silva C."/>
            <person name="Jaillon O."/>
            <person name="Porcel B.M."/>
            <person name="Couloux A."/>
            <person name="Aury J.-M."/>
            <person name="Segurens B."/>
            <person name="Poulain J."/>
            <person name="Anthouard V."/>
            <person name="Grossetete S."/>
            <person name="Khalili H."/>
            <person name="Coppin E."/>
            <person name="Dequard-Chablat M."/>
            <person name="Picard M."/>
            <person name="Contamine V."/>
            <person name="Arnaise S."/>
            <person name="Bourdais A."/>
            <person name="Berteaux-Lecellier V."/>
            <person name="Gautheret D."/>
            <person name="de Vries R.P."/>
            <person name="Battaglia E."/>
            <person name="Coutinho P.M."/>
            <person name="Danchin E.G.J."/>
            <person name="Henrissat B."/>
            <person name="El Khoury R."/>
            <person name="Sainsard-Chanet A."/>
            <person name="Boivin A."/>
            <person name="Pinan-Lucarre B."/>
            <person name="Sellem C.H."/>
            <person name="Debuchy R."/>
            <person name="Wincker P."/>
            <person name="Weissenbach J."/>
            <person name="Silar P."/>
        </authorList>
    </citation>
    <scope>NUCLEOTIDE SEQUENCE [LARGE SCALE GENOMIC DNA]</scope>
    <source>
        <strain>S / ATCC MYA-4624 / DSM 980 / FGSC 10383</strain>
    </source>
</reference>
<reference key="2">
    <citation type="journal article" date="2014" name="Genetics">
        <title>Maintaining two mating types: Structure of the mating type locus and its role in heterokaryosis in Podospora anserina.</title>
        <authorList>
            <person name="Grognet P."/>
            <person name="Bidard F."/>
            <person name="Kuchly C."/>
            <person name="Tong L.C.H."/>
            <person name="Coppin E."/>
            <person name="Benkhali J.A."/>
            <person name="Couloux A."/>
            <person name="Wincker P."/>
            <person name="Debuchy R."/>
            <person name="Silar P."/>
        </authorList>
    </citation>
    <scope>GENOME REANNOTATION</scope>
    <source>
        <strain>S / ATCC MYA-4624 / DSM 980 / FGSC 10383</strain>
    </source>
</reference>
<gene>
    <name type="primary">LOS1</name>
    <name type="ordered locus">Pa_7_10490</name>
    <name type="ORF">PODANS_7_10490</name>
</gene>
<feature type="chain" id="PRO_0000343104" description="Exportin-T">
    <location>
        <begin position="1"/>
        <end position="1014"/>
    </location>
</feature>
<keyword id="KW-0963">Cytoplasm</keyword>
<keyword id="KW-0539">Nucleus</keyword>
<keyword id="KW-1185">Reference proteome</keyword>
<keyword id="KW-0694">RNA-binding</keyword>
<keyword id="KW-0813">Transport</keyword>
<keyword id="KW-0819">tRNA processing</keyword>
<keyword id="KW-0820">tRNA-binding</keyword>
<protein>
    <recommendedName>
        <fullName>Exportin-T</fullName>
    </recommendedName>
    <alternativeName>
        <fullName>Exportin(tRNA)</fullName>
    </alternativeName>
    <alternativeName>
        <fullName>Karyopherin-beta</fullName>
    </alternativeName>
    <alternativeName>
        <fullName>tRNA exportin</fullName>
    </alternativeName>
</protein>
<dbReference type="EMBL" id="CU633900">
    <property type="protein sequence ID" value="CAP69090.1"/>
    <property type="status" value="ALT_SEQ"/>
    <property type="molecule type" value="Genomic_DNA"/>
</dbReference>
<dbReference type="EMBL" id="FO904942">
    <property type="protein sequence ID" value="CDP32567.1"/>
    <property type="molecule type" value="Genomic_DNA"/>
</dbReference>
<dbReference type="RefSeq" id="XP_001908417.1">
    <property type="nucleotide sequence ID" value="XM_001908382.1"/>
</dbReference>
<dbReference type="SMR" id="B2AXG6"/>
<dbReference type="FunCoup" id="B2AXG6">
    <property type="interactions" value="1026"/>
</dbReference>
<dbReference type="STRING" id="515849.B2AXG6"/>
<dbReference type="GeneID" id="6192513"/>
<dbReference type="KEGG" id="pan:PODANSg5452"/>
<dbReference type="eggNOG" id="KOG2021">
    <property type="taxonomic scope" value="Eukaryota"/>
</dbReference>
<dbReference type="HOGENOM" id="CLU_004414_0_1_1"/>
<dbReference type="InParanoid" id="B2AXG6"/>
<dbReference type="OrthoDB" id="26399at2759"/>
<dbReference type="Proteomes" id="UP000001197">
    <property type="component" value="Chromosome 7"/>
</dbReference>
<dbReference type="GO" id="GO:0005737">
    <property type="term" value="C:cytoplasm"/>
    <property type="evidence" value="ECO:0007669"/>
    <property type="project" value="UniProtKB-SubCell"/>
</dbReference>
<dbReference type="GO" id="GO:0016363">
    <property type="term" value="C:nuclear matrix"/>
    <property type="evidence" value="ECO:0007669"/>
    <property type="project" value="TreeGrafter"/>
</dbReference>
<dbReference type="GO" id="GO:0005643">
    <property type="term" value="C:nuclear pore"/>
    <property type="evidence" value="ECO:0007669"/>
    <property type="project" value="TreeGrafter"/>
</dbReference>
<dbReference type="GO" id="GO:0031267">
    <property type="term" value="F:small GTPase binding"/>
    <property type="evidence" value="ECO:0007669"/>
    <property type="project" value="InterPro"/>
</dbReference>
<dbReference type="GO" id="GO:0000049">
    <property type="term" value="F:tRNA binding"/>
    <property type="evidence" value="ECO:0007669"/>
    <property type="project" value="UniProtKB-KW"/>
</dbReference>
<dbReference type="GO" id="GO:0008033">
    <property type="term" value="P:tRNA processing"/>
    <property type="evidence" value="ECO:0007669"/>
    <property type="project" value="UniProtKB-KW"/>
</dbReference>
<dbReference type="GO" id="GO:0071528">
    <property type="term" value="P:tRNA re-export from nucleus"/>
    <property type="evidence" value="ECO:0007669"/>
    <property type="project" value="InterPro"/>
</dbReference>
<dbReference type="FunFam" id="1.25.10.10:FF:000355">
    <property type="entry name" value="Exportin-T"/>
    <property type="match status" value="1"/>
</dbReference>
<dbReference type="Gene3D" id="1.25.10.10">
    <property type="entry name" value="Leucine-rich Repeat Variant"/>
    <property type="match status" value="1"/>
</dbReference>
<dbReference type="InterPro" id="IPR011989">
    <property type="entry name" value="ARM-like"/>
</dbReference>
<dbReference type="InterPro" id="IPR016024">
    <property type="entry name" value="ARM-type_fold"/>
</dbReference>
<dbReference type="InterPro" id="IPR013598">
    <property type="entry name" value="Exportin-1/Importin-b-like"/>
</dbReference>
<dbReference type="InterPro" id="IPR045546">
    <property type="entry name" value="Exportin-T_C"/>
</dbReference>
<dbReference type="InterPro" id="IPR040017">
    <property type="entry name" value="XPOT"/>
</dbReference>
<dbReference type="PANTHER" id="PTHR15952:SF11">
    <property type="entry name" value="EXPORTIN-T"/>
    <property type="match status" value="1"/>
</dbReference>
<dbReference type="PANTHER" id="PTHR15952">
    <property type="entry name" value="EXPORTIN-T/LOS1"/>
    <property type="match status" value="1"/>
</dbReference>
<dbReference type="Pfam" id="PF19282">
    <property type="entry name" value="Exportin-T"/>
    <property type="match status" value="1"/>
</dbReference>
<dbReference type="Pfam" id="PF08389">
    <property type="entry name" value="Xpo1"/>
    <property type="match status" value="1"/>
</dbReference>
<dbReference type="SUPFAM" id="SSF48371">
    <property type="entry name" value="ARM repeat"/>
    <property type="match status" value="1"/>
</dbReference>
<proteinExistence type="inferred from homology"/>
<evidence type="ECO:0000250" key="1"/>
<evidence type="ECO:0000305" key="2"/>
<organism>
    <name type="scientific">Podospora anserina (strain S / ATCC MYA-4624 / DSM 980 / FGSC 10383)</name>
    <name type="common">Pleurage anserina</name>
    <dbReference type="NCBI Taxonomy" id="515849"/>
    <lineage>
        <taxon>Eukaryota</taxon>
        <taxon>Fungi</taxon>
        <taxon>Dikarya</taxon>
        <taxon>Ascomycota</taxon>
        <taxon>Pezizomycotina</taxon>
        <taxon>Sordariomycetes</taxon>
        <taxon>Sordariomycetidae</taxon>
        <taxon>Sordariales</taxon>
        <taxon>Podosporaceae</taxon>
        <taxon>Podospora</taxon>
        <taxon>Podospora anserina</taxon>
    </lineage>
</organism>
<sequence>MDAQIENAIEVAWNPSSSQELKGQAFEYLNQLRVDPQAWQVCIGLFTRSPPASEVVRLVSLEIINNAVHSEALDAASLVYLKQSLLEYIGRTYTSNTQSQVDPAHLQNKLTQTLTYLFVFLYREHWSSFVQDFYAIAQNDNLPGVILYLRILSSIHDEIADLMLSRQEQEAKRNSDLKDLIRERDMAKIATSWTDILSRYSNQHDGVVEMTLKIIGKWVSWIDISLVINQQMLGLLLPLVGRSNASGGEDKVRDIAVDTFTEIVSKKMKASDKIEMINFLQLREIITELLASPPLNEWKGTSQYDTDLAEVVAKLVNAIMSDIVRVLEDGKVDNDTRAKAEQLLQYFLPSLLRLFSDEYDEVCSTVIPSLTDLLTFLRKVRTLPATYAEMLPPILNAIVLKMRYDETSNWGLEDEQTDEAEFLELRKRLQILQKSVAAVDENLCMEFMSNLVGNMFSTLQQQGSQMDWRDLDLALHEMYLFGELALPNMGLAAKSQPNPVAAERLALMMSKMVDSGIANYAHPAILLQYMEICVRYHSFFESHQNYIPRVLENFVRLVHHEHVRVRTRSWYLFLRFVKTLRAQVGNVAKTVIESISDLLPIKAEVPSNDADDDMSSDESDHSADAVFNGQLYLFEAVGCVSATSATPVADQALYARSVMEPLFSDMSVHLERAKAGDAQAILQIHHIIMALGTLANGFADTPLGHTKARAQPAQEISAEFTRASEAILIALNQLNTSDEIRAACRSAFSRLLGVLGSAVLPQLPQWIEGLLSRSSSKDEMAMFLRLLEQIVYNFKGEISNILDLLLTPLLQRVFGGLSEPINGTDDEIQLQELRREYVSFVQVIFMNDLGGVLVSAANQGNFESLVSSIFSVAKNLNHGNLVASRIAFNVLSRMITQWGGPDIITPGENPVATGPPSPTIPGFEQFMLSQFHGVCWDVLQDGGFRPSSDATSRQILNEIAGIQQAIWMKTADLYINHVQNQLGQDSNDFLRTLTTTTARKPLVDWFLALLKGRK</sequence>
<name>XPOT_PODAN</name>
<accession>B2AXG6</accession>
<accession>A0A090CXI0</accession>
<comment type="function">
    <text evidence="1">tRNA nucleus export receptor which facilitates tRNA translocation across the nuclear pore complex. Involved in pre-tRNA splicing, probably by affecting the interaction of pre-tRNA with splicing endonuclease (By similarity).</text>
</comment>
<comment type="subcellular location">
    <subcellularLocation>
        <location evidence="1">Nucleus</location>
    </subcellularLocation>
    <subcellularLocation>
        <location evidence="1">Cytoplasm</location>
    </subcellularLocation>
    <text evidence="1">Shuttles between the nucleus and the cytoplasm.</text>
</comment>
<comment type="similarity">
    <text evidence="2">Belongs to the exportin family.</text>
</comment>
<comment type="sequence caution" evidence="2">
    <conflict type="erroneous gene model prediction">
        <sequence resource="EMBL-CDS" id="CAP69090"/>
    </conflict>
</comment>